<evidence type="ECO:0000255" key="1">
    <source>
        <dbReference type="HAMAP-Rule" id="MF_01521"/>
    </source>
</evidence>
<gene>
    <name evidence="1" type="primary">mntP</name>
    <name type="ordered locus">YPDSF_1370</name>
</gene>
<name>MNTP_YERPP</name>
<organism>
    <name type="scientific">Yersinia pestis (strain Pestoides F)</name>
    <dbReference type="NCBI Taxonomy" id="386656"/>
    <lineage>
        <taxon>Bacteria</taxon>
        <taxon>Pseudomonadati</taxon>
        <taxon>Pseudomonadota</taxon>
        <taxon>Gammaproteobacteria</taxon>
        <taxon>Enterobacterales</taxon>
        <taxon>Yersiniaceae</taxon>
        <taxon>Yersinia</taxon>
    </lineage>
</organism>
<keyword id="KW-0997">Cell inner membrane</keyword>
<keyword id="KW-1003">Cell membrane</keyword>
<keyword id="KW-0406">Ion transport</keyword>
<keyword id="KW-0464">Manganese</keyword>
<keyword id="KW-0472">Membrane</keyword>
<keyword id="KW-0812">Transmembrane</keyword>
<keyword id="KW-1133">Transmembrane helix</keyword>
<keyword id="KW-0813">Transport</keyword>
<feature type="chain" id="PRO_0000296946" description="Putative manganese efflux pump MntP">
    <location>
        <begin position="1"/>
        <end position="189"/>
    </location>
</feature>
<feature type="transmembrane region" description="Helical" evidence="1">
    <location>
        <begin position="3"/>
        <end position="23"/>
    </location>
</feature>
<feature type="transmembrane region" description="Helical" evidence="1">
    <location>
        <begin position="41"/>
        <end position="61"/>
    </location>
</feature>
<feature type="transmembrane region" description="Helical" evidence="1">
    <location>
        <begin position="65"/>
        <end position="85"/>
    </location>
</feature>
<feature type="transmembrane region" description="Helical" evidence="1">
    <location>
        <begin position="104"/>
        <end position="124"/>
    </location>
</feature>
<feature type="transmembrane region" description="Helical" evidence="1">
    <location>
        <begin position="132"/>
        <end position="152"/>
    </location>
</feature>
<feature type="transmembrane region" description="Helical" evidence="1">
    <location>
        <begin position="167"/>
        <end position="187"/>
    </location>
</feature>
<reference key="1">
    <citation type="submission" date="2007-02" db="EMBL/GenBank/DDBJ databases">
        <title>Complete sequence of chromosome of Yersinia pestis Pestoides F.</title>
        <authorList>
            <consortium name="US DOE Joint Genome Institute"/>
            <person name="Copeland A."/>
            <person name="Lucas S."/>
            <person name="Lapidus A."/>
            <person name="Barry K."/>
            <person name="Detter J.C."/>
            <person name="Glavina del Rio T."/>
            <person name="Hammon N."/>
            <person name="Israni S."/>
            <person name="Dalin E."/>
            <person name="Tice H."/>
            <person name="Pitluck S."/>
            <person name="Di Bartolo G."/>
            <person name="Chain P."/>
            <person name="Malfatti S."/>
            <person name="Shin M."/>
            <person name="Vergez L."/>
            <person name="Schmutz J."/>
            <person name="Larimer F."/>
            <person name="Land M."/>
            <person name="Hauser L."/>
            <person name="Worsham P."/>
            <person name="Chu M."/>
            <person name="Bearden S."/>
            <person name="Garcia E."/>
            <person name="Richardson P."/>
        </authorList>
    </citation>
    <scope>NUCLEOTIDE SEQUENCE [LARGE SCALE GENOMIC DNA]</scope>
    <source>
        <strain>Pestoides F</strain>
    </source>
</reference>
<sequence>MNLSATIILAFAMSMDAFAASIGKGATLYKPRFREALRTGLIFGVIEAITPLIGWCIGLFASQYIMEWDHWIAFSLLFILGCRMIFEGMKQRVAETEKMRSHSFWVLVTTAIATSLDAMAIGVGLAFLQVDIVHTAMAIGLATMIMATLGMLIGRYIGPLLGKRAEIIGGIVLIGIGFNILYEHMHLTA</sequence>
<comment type="function">
    <text evidence="1">Probably functions as a manganese efflux pump.</text>
</comment>
<comment type="subcellular location">
    <subcellularLocation>
        <location evidence="1">Cell inner membrane</location>
        <topology evidence="1">Multi-pass membrane protein</topology>
    </subcellularLocation>
</comment>
<comment type="similarity">
    <text evidence="1">Belongs to the MntP (TC 9.B.29) family.</text>
</comment>
<accession>A4TKE7</accession>
<proteinExistence type="inferred from homology"/>
<protein>
    <recommendedName>
        <fullName evidence="1">Putative manganese efflux pump MntP</fullName>
    </recommendedName>
</protein>
<dbReference type="EMBL" id="CP000668">
    <property type="protein sequence ID" value="ABP39759.1"/>
    <property type="molecule type" value="Genomic_DNA"/>
</dbReference>
<dbReference type="RefSeq" id="WP_002211065.1">
    <property type="nucleotide sequence ID" value="NZ_CP009715.1"/>
</dbReference>
<dbReference type="GeneID" id="57976826"/>
<dbReference type="KEGG" id="ypp:YPDSF_1370"/>
<dbReference type="PATRIC" id="fig|386656.14.peg.2427"/>
<dbReference type="GO" id="GO:0005886">
    <property type="term" value="C:plasma membrane"/>
    <property type="evidence" value="ECO:0007669"/>
    <property type="project" value="UniProtKB-SubCell"/>
</dbReference>
<dbReference type="GO" id="GO:0005384">
    <property type="term" value="F:manganese ion transmembrane transporter activity"/>
    <property type="evidence" value="ECO:0007669"/>
    <property type="project" value="UniProtKB-UniRule"/>
</dbReference>
<dbReference type="HAMAP" id="MF_01521">
    <property type="entry name" value="MntP_pump"/>
    <property type="match status" value="1"/>
</dbReference>
<dbReference type="InterPro" id="IPR003810">
    <property type="entry name" value="Mntp/YtaF"/>
</dbReference>
<dbReference type="InterPro" id="IPR022929">
    <property type="entry name" value="Put_MntP"/>
</dbReference>
<dbReference type="NCBIfam" id="NF008546">
    <property type="entry name" value="PRK11469.1"/>
    <property type="match status" value="1"/>
</dbReference>
<dbReference type="PANTHER" id="PTHR35529">
    <property type="entry name" value="MANGANESE EFFLUX PUMP MNTP-RELATED"/>
    <property type="match status" value="1"/>
</dbReference>
<dbReference type="PANTHER" id="PTHR35529:SF1">
    <property type="entry name" value="MANGANESE EFFLUX PUMP MNTP-RELATED"/>
    <property type="match status" value="1"/>
</dbReference>
<dbReference type="Pfam" id="PF02659">
    <property type="entry name" value="Mntp"/>
    <property type="match status" value="1"/>
</dbReference>